<accession>Q9WV98</accession>
<gene>
    <name type="primary">Timm9</name>
    <name type="synonym">Tim9</name>
    <name type="synonym">Tim9a</name>
    <name type="synonym">Timm9a</name>
</gene>
<organism>
    <name type="scientific">Mus musculus</name>
    <name type="common">Mouse</name>
    <dbReference type="NCBI Taxonomy" id="10090"/>
    <lineage>
        <taxon>Eukaryota</taxon>
        <taxon>Metazoa</taxon>
        <taxon>Chordata</taxon>
        <taxon>Craniata</taxon>
        <taxon>Vertebrata</taxon>
        <taxon>Euteleostomi</taxon>
        <taxon>Mammalia</taxon>
        <taxon>Eutheria</taxon>
        <taxon>Euarchontoglires</taxon>
        <taxon>Glires</taxon>
        <taxon>Rodentia</taxon>
        <taxon>Myomorpha</taxon>
        <taxon>Muroidea</taxon>
        <taxon>Muridae</taxon>
        <taxon>Murinae</taxon>
        <taxon>Mus</taxon>
        <taxon>Mus</taxon>
    </lineage>
</organism>
<evidence type="ECO:0000250" key="1"/>
<evidence type="ECO:0000250" key="2">
    <source>
        <dbReference type="UniProtKB" id="Q9Y5J7"/>
    </source>
</evidence>
<evidence type="ECO:0000305" key="3"/>
<name>TIM9_MOUSE</name>
<proteinExistence type="evidence at protein level"/>
<reference key="1">
    <citation type="journal article" date="1999" name="FEBS Lett.">
        <title>The mitochondrial TIM22 preprotein translocase is highly conserved throughout the eukaryotic kingdom.</title>
        <authorList>
            <person name="Bauer M.F."/>
            <person name="Rothbauer U."/>
            <person name="Muehlenbein N."/>
            <person name="Smith R.J.H."/>
            <person name="Gerbitz K.-D."/>
            <person name="Neupert W."/>
            <person name="Brunner M."/>
            <person name="Hofmann S."/>
        </authorList>
    </citation>
    <scope>NUCLEOTIDE SEQUENCE [MRNA]</scope>
</reference>
<reference key="2">
    <citation type="journal article" date="2005" name="Science">
        <title>The transcriptional landscape of the mammalian genome.</title>
        <authorList>
            <person name="Carninci P."/>
            <person name="Kasukawa T."/>
            <person name="Katayama S."/>
            <person name="Gough J."/>
            <person name="Frith M.C."/>
            <person name="Maeda N."/>
            <person name="Oyama R."/>
            <person name="Ravasi T."/>
            <person name="Lenhard B."/>
            <person name="Wells C."/>
            <person name="Kodzius R."/>
            <person name="Shimokawa K."/>
            <person name="Bajic V.B."/>
            <person name="Brenner S.E."/>
            <person name="Batalov S."/>
            <person name="Forrest A.R."/>
            <person name="Zavolan M."/>
            <person name="Davis M.J."/>
            <person name="Wilming L.G."/>
            <person name="Aidinis V."/>
            <person name="Allen J.E."/>
            <person name="Ambesi-Impiombato A."/>
            <person name="Apweiler R."/>
            <person name="Aturaliya R.N."/>
            <person name="Bailey T.L."/>
            <person name="Bansal M."/>
            <person name="Baxter L."/>
            <person name="Beisel K.W."/>
            <person name="Bersano T."/>
            <person name="Bono H."/>
            <person name="Chalk A.M."/>
            <person name="Chiu K.P."/>
            <person name="Choudhary V."/>
            <person name="Christoffels A."/>
            <person name="Clutterbuck D.R."/>
            <person name="Crowe M.L."/>
            <person name="Dalla E."/>
            <person name="Dalrymple B.P."/>
            <person name="de Bono B."/>
            <person name="Della Gatta G."/>
            <person name="di Bernardo D."/>
            <person name="Down T."/>
            <person name="Engstrom P."/>
            <person name="Fagiolini M."/>
            <person name="Faulkner G."/>
            <person name="Fletcher C.F."/>
            <person name="Fukushima T."/>
            <person name="Furuno M."/>
            <person name="Futaki S."/>
            <person name="Gariboldi M."/>
            <person name="Georgii-Hemming P."/>
            <person name="Gingeras T.R."/>
            <person name="Gojobori T."/>
            <person name="Green R.E."/>
            <person name="Gustincich S."/>
            <person name="Harbers M."/>
            <person name="Hayashi Y."/>
            <person name="Hensch T.K."/>
            <person name="Hirokawa N."/>
            <person name="Hill D."/>
            <person name="Huminiecki L."/>
            <person name="Iacono M."/>
            <person name="Ikeo K."/>
            <person name="Iwama A."/>
            <person name="Ishikawa T."/>
            <person name="Jakt M."/>
            <person name="Kanapin A."/>
            <person name="Katoh M."/>
            <person name="Kawasawa Y."/>
            <person name="Kelso J."/>
            <person name="Kitamura H."/>
            <person name="Kitano H."/>
            <person name="Kollias G."/>
            <person name="Krishnan S.P."/>
            <person name="Kruger A."/>
            <person name="Kummerfeld S.K."/>
            <person name="Kurochkin I.V."/>
            <person name="Lareau L.F."/>
            <person name="Lazarevic D."/>
            <person name="Lipovich L."/>
            <person name="Liu J."/>
            <person name="Liuni S."/>
            <person name="McWilliam S."/>
            <person name="Madan Babu M."/>
            <person name="Madera M."/>
            <person name="Marchionni L."/>
            <person name="Matsuda H."/>
            <person name="Matsuzawa S."/>
            <person name="Miki H."/>
            <person name="Mignone F."/>
            <person name="Miyake S."/>
            <person name="Morris K."/>
            <person name="Mottagui-Tabar S."/>
            <person name="Mulder N."/>
            <person name="Nakano N."/>
            <person name="Nakauchi H."/>
            <person name="Ng P."/>
            <person name="Nilsson R."/>
            <person name="Nishiguchi S."/>
            <person name="Nishikawa S."/>
            <person name="Nori F."/>
            <person name="Ohara O."/>
            <person name="Okazaki Y."/>
            <person name="Orlando V."/>
            <person name="Pang K.C."/>
            <person name="Pavan W.J."/>
            <person name="Pavesi G."/>
            <person name="Pesole G."/>
            <person name="Petrovsky N."/>
            <person name="Piazza S."/>
            <person name="Reed J."/>
            <person name="Reid J.F."/>
            <person name="Ring B.Z."/>
            <person name="Ringwald M."/>
            <person name="Rost B."/>
            <person name="Ruan Y."/>
            <person name="Salzberg S.L."/>
            <person name="Sandelin A."/>
            <person name="Schneider C."/>
            <person name="Schoenbach C."/>
            <person name="Sekiguchi K."/>
            <person name="Semple C.A."/>
            <person name="Seno S."/>
            <person name="Sessa L."/>
            <person name="Sheng Y."/>
            <person name="Shibata Y."/>
            <person name="Shimada H."/>
            <person name="Shimada K."/>
            <person name="Silva D."/>
            <person name="Sinclair B."/>
            <person name="Sperling S."/>
            <person name="Stupka E."/>
            <person name="Sugiura K."/>
            <person name="Sultana R."/>
            <person name="Takenaka Y."/>
            <person name="Taki K."/>
            <person name="Tammoja K."/>
            <person name="Tan S.L."/>
            <person name="Tang S."/>
            <person name="Taylor M.S."/>
            <person name="Tegner J."/>
            <person name="Teichmann S.A."/>
            <person name="Ueda H.R."/>
            <person name="van Nimwegen E."/>
            <person name="Verardo R."/>
            <person name="Wei C.L."/>
            <person name="Yagi K."/>
            <person name="Yamanishi H."/>
            <person name="Zabarovsky E."/>
            <person name="Zhu S."/>
            <person name="Zimmer A."/>
            <person name="Hide W."/>
            <person name="Bult C."/>
            <person name="Grimmond S.M."/>
            <person name="Teasdale R.D."/>
            <person name="Liu E.T."/>
            <person name="Brusic V."/>
            <person name="Quackenbush J."/>
            <person name="Wahlestedt C."/>
            <person name="Mattick J.S."/>
            <person name="Hume D.A."/>
            <person name="Kai C."/>
            <person name="Sasaki D."/>
            <person name="Tomaru Y."/>
            <person name="Fukuda S."/>
            <person name="Kanamori-Katayama M."/>
            <person name="Suzuki M."/>
            <person name="Aoki J."/>
            <person name="Arakawa T."/>
            <person name="Iida J."/>
            <person name="Imamura K."/>
            <person name="Itoh M."/>
            <person name="Kato T."/>
            <person name="Kawaji H."/>
            <person name="Kawagashira N."/>
            <person name="Kawashima T."/>
            <person name="Kojima M."/>
            <person name="Kondo S."/>
            <person name="Konno H."/>
            <person name="Nakano K."/>
            <person name="Ninomiya N."/>
            <person name="Nishio T."/>
            <person name="Okada M."/>
            <person name="Plessy C."/>
            <person name="Shibata K."/>
            <person name="Shiraki T."/>
            <person name="Suzuki S."/>
            <person name="Tagami M."/>
            <person name="Waki K."/>
            <person name="Watahiki A."/>
            <person name="Okamura-Oho Y."/>
            <person name="Suzuki H."/>
            <person name="Kawai J."/>
            <person name="Hayashizaki Y."/>
        </authorList>
    </citation>
    <scope>NUCLEOTIDE SEQUENCE [LARGE SCALE MRNA]</scope>
    <source>
        <strain>C57BL/6J</strain>
        <tissue>Cerebellum</tissue>
    </source>
</reference>
<reference key="3">
    <citation type="journal article" date="2004" name="Genome Res.">
        <title>The status, quality, and expansion of the NIH full-length cDNA project: the Mammalian Gene Collection (MGC).</title>
        <authorList>
            <consortium name="The MGC Project Team"/>
        </authorList>
    </citation>
    <scope>NUCLEOTIDE SEQUENCE [LARGE SCALE MRNA]</scope>
    <source>
        <strain>FVB/N</strain>
        <tissue>Kidney</tissue>
    </source>
</reference>
<reference key="4">
    <citation type="submission" date="2007-04" db="UniProtKB">
        <authorList>
            <person name="Lubec G."/>
            <person name="Kang S.U."/>
        </authorList>
    </citation>
    <scope>PROTEIN SEQUENCE OF 16-34 AND 67-89</scope>
    <scope>IDENTIFICATION BY MASS SPECTROMETRY</scope>
    <source>
        <strain>C57BL/6J</strain>
        <tissue>Brain</tissue>
    </source>
</reference>
<reference key="5">
    <citation type="journal article" date="2010" name="Cell">
        <title>A tissue-specific atlas of mouse protein phosphorylation and expression.</title>
        <authorList>
            <person name="Huttlin E.L."/>
            <person name="Jedrychowski M.P."/>
            <person name="Elias J.E."/>
            <person name="Goswami T."/>
            <person name="Rad R."/>
            <person name="Beausoleil S.A."/>
            <person name="Villen J."/>
            <person name="Haas W."/>
            <person name="Sowa M.E."/>
            <person name="Gygi S.P."/>
        </authorList>
    </citation>
    <scope>IDENTIFICATION BY MASS SPECTROMETRY [LARGE SCALE ANALYSIS]</scope>
    <source>
        <tissue>Brain</tissue>
        <tissue>Brown adipose tissue</tissue>
        <tissue>Heart</tissue>
        <tissue>Kidney</tissue>
        <tissue>Liver</tissue>
        <tissue>Lung</tissue>
        <tissue>Pancreas</tissue>
        <tissue>Spleen</tissue>
        <tissue>Testis</tissue>
    </source>
</reference>
<keyword id="KW-0007">Acetylation</keyword>
<keyword id="KW-0143">Chaperone</keyword>
<keyword id="KW-0903">Direct protein sequencing</keyword>
<keyword id="KW-1015">Disulfide bond</keyword>
<keyword id="KW-0472">Membrane</keyword>
<keyword id="KW-0479">Metal-binding</keyword>
<keyword id="KW-0496">Mitochondrion</keyword>
<keyword id="KW-0999">Mitochondrion inner membrane</keyword>
<keyword id="KW-0653">Protein transport</keyword>
<keyword id="KW-1185">Reference proteome</keyword>
<keyword id="KW-0811">Translocation</keyword>
<keyword id="KW-0813">Transport</keyword>
<keyword id="KW-0862">Zinc</keyword>
<dbReference type="EMBL" id="AF150101">
    <property type="protein sequence ID" value="AAD40007.1"/>
    <property type="molecule type" value="mRNA"/>
</dbReference>
<dbReference type="EMBL" id="AK018764">
    <property type="protein sequence ID" value="BAB31394.1"/>
    <property type="molecule type" value="mRNA"/>
</dbReference>
<dbReference type="EMBL" id="BC024370">
    <property type="protein sequence ID" value="AAH24370.1"/>
    <property type="molecule type" value="mRNA"/>
</dbReference>
<dbReference type="CCDS" id="CCDS25962.1"/>
<dbReference type="PIR" id="T51192">
    <property type="entry name" value="T51192"/>
</dbReference>
<dbReference type="RefSeq" id="NP_001020024.1">
    <property type="nucleotide sequence ID" value="NM_001024853.1"/>
</dbReference>
<dbReference type="RefSeq" id="NP_001020025.1">
    <property type="nucleotide sequence ID" value="NM_001024854.1"/>
</dbReference>
<dbReference type="RefSeq" id="NP_001273132.1">
    <property type="nucleotide sequence ID" value="NM_001286203.2"/>
</dbReference>
<dbReference type="RefSeq" id="NP_038924.1">
    <property type="nucleotide sequence ID" value="NM_013896.3"/>
</dbReference>
<dbReference type="RefSeq" id="XP_011242424.1">
    <property type="nucleotide sequence ID" value="XM_011244122.4"/>
</dbReference>
<dbReference type="RefSeq" id="XP_017170577.1">
    <property type="nucleotide sequence ID" value="XM_017315088.3"/>
</dbReference>
<dbReference type="RefSeq" id="XP_036013359.1">
    <property type="nucleotide sequence ID" value="XM_036157466.1"/>
</dbReference>
<dbReference type="RefSeq" id="XP_036013360.1">
    <property type="nucleotide sequence ID" value="XM_036157467.1"/>
</dbReference>
<dbReference type="SMR" id="Q9WV98"/>
<dbReference type="BioGRID" id="205958">
    <property type="interactions" value="5"/>
</dbReference>
<dbReference type="FunCoup" id="Q9WV98">
    <property type="interactions" value="2884"/>
</dbReference>
<dbReference type="IntAct" id="Q9WV98">
    <property type="interactions" value="1"/>
</dbReference>
<dbReference type="STRING" id="10090.ENSMUSP00000126298"/>
<dbReference type="PhosphoSitePlus" id="Q9WV98"/>
<dbReference type="SwissPalm" id="Q9WV98"/>
<dbReference type="jPOST" id="Q9WV98"/>
<dbReference type="PaxDb" id="10090-ENSMUSP00000126298"/>
<dbReference type="PeptideAtlas" id="Q9WV98"/>
<dbReference type="ProteomicsDB" id="262788"/>
<dbReference type="Pumba" id="Q9WV98"/>
<dbReference type="Antibodypedia" id="116">
    <property type="antibodies" value="110 antibodies from 21 providers"/>
</dbReference>
<dbReference type="DNASU" id="30056"/>
<dbReference type="Ensembl" id="ENSMUST00000021486.10">
    <property type="protein sequence ID" value="ENSMUSP00000021486.9"/>
    <property type="gene ID" value="ENSMUSG00000021079.17"/>
</dbReference>
<dbReference type="Ensembl" id="ENSMUST00000166120.9">
    <property type="protein sequence ID" value="ENSMUSP00000126298.2"/>
    <property type="gene ID" value="ENSMUSG00000021079.17"/>
</dbReference>
<dbReference type="Ensembl" id="ENSMUST00000220482.2">
    <property type="protein sequence ID" value="ENSMUSP00000152114.2"/>
    <property type="gene ID" value="ENSMUSG00000021079.17"/>
</dbReference>
<dbReference type="Ensembl" id="ENSMUST00000221367.2">
    <property type="protein sequence ID" value="ENSMUSP00000152574.2"/>
    <property type="gene ID" value="ENSMUSG00000021079.17"/>
</dbReference>
<dbReference type="Ensembl" id="ENSMUST00000221559.2">
    <property type="protein sequence ID" value="ENSMUSP00000152455.2"/>
    <property type="gene ID" value="ENSMUSG00000021079.17"/>
</dbReference>
<dbReference type="GeneID" id="30056"/>
<dbReference type="KEGG" id="mmu:30056"/>
<dbReference type="UCSC" id="uc007nuh.1">
    <property type="organism name" value="mouse"/>
</dbReference>
<dbReference type="AGR" id="MGI:1353436"/>
<dbReference type="CTD" id="26520"/>
<dbReference type="MGI" id="MGI:1353436">
    <property type="gene designation" value="Timm9"/>
</dbReference>
<dbReference type="VEuPathDB" id="HostDB:ENSMUSG00000021079"/>
<dbReference type="eggNOG" id="KOG3479">
    <property type="taxonomic scope" value="Eukaryota"/>
</dbReference>
<dbReference type="GeneTree" id="ENSGT00940000160102"/>
<dbReference type="HOGENOM" id="CLU_141397_3_3_1"/>
<dbReference type="InParanoid" id="Q9WV98"/>
<dbReference type="OMA" id="QDFLRMY"/>
<dbReference type="OrthoDB" id="1551503at2759"/>
<dbReference type="PhylomeDB" id="Q9WV98"/>
<dbReference type="TreeFam" id="TF106192"/>
<dbReference type="BioGRID-ORCS" id="30056">
    <property type="hits" value="10 hits in 75 CRISPR screens"/>
</dbReference>
<dbReference type="ChiTaRS" id="Timm9">
    <property type="organism name" value="mouse"/>
</dbReference>
<dbReference type="PRO" id="PR:Q9WV98"/>
<dbReference type="Proteomes" id="UP000000589">
    <property type="component" value="Chromosome 12"/>
</dbReference>
<dbReference type="RNAct" id="Q9WV98">
    <property type="molecule type" value="protein"/>
</dbReference>
<dbReference type="Bgee" id="ENSMUSG00000021079">
    <property type="expression patterns" value="Expressed in ectoplacental cone and 280 other cell types or tissues"/>
</dbReference>
<dbReference type="ExpressionAtlas" id="Q9WV98">
    <property type="expression patterns" value="baseline and differential"/>
</dbReference>
<dbReference type="GO" id="GO:0042719">
    <property type="term" value="C:mitochondrial intermembrane space protein transporter complex"/>
    <property type="evidence" value="ECO:0000314"/>
    <property type="project" value="BHF-UCL"/>
</dbReference>
<dbReference type="GO" id="GO:0005739">
    <property type="term" value="C:mitochondrion"/>
    <property type="evidence" value="ECO:0007005"/>
    <property type="project" value="MGI"/>
</dbReference>
<dbReference type="GO" id="GO:0042721">
    <property type="term" value="C:TIM22 mitochondrial import inner membrane insertion complex"/>
    <property type="evidence" value="ECO:0007669"/>
    <property type="project" value="Ensembl"/>
</dbReference>
<dbReference type="GO" id="GO:0032977">
    <property type="term" value="F:membrane insertase activity"/>
    <property type="evidence" value="ECO:0007669"/>
    <property type="project" value="Ensembl"/>
</dbReference>
<dbReference type="GO" id="GO:0046872">
    <property type="term" value="F:metal ion binding"/>
    <property type="evidence" value="ECO:0007669"/>
    <property type="project" value="UniProtKB-KW"/>
</dbReference>
<dbReference type="GO" id="GO:0042803">
    <property type="term" value="F:protein homodimerization activity"/>
    <property type="evidence" value="ECO:0007669"/>
    <property type="project" value="Ensembl"/>
</dbReference>
<dbReference type="GO" id="GO:0051087">
    <property type="term" value="F:protein-folding chaperone binding"/>
    <property type="evidence" value="ECO:0007669"/>
    <property type="project" value="Ensembl"/>
</dbReference>
<dbReference type="GO" id="GO:0045039">
    <property type="term" value="P:protein insertion into mitochondrial inner membrane"/>
    <property type="evidence" value="ECO:0000314"/>
    <property type="project" value="BHF-UCL"/>
</dbReference>
<dbReference type="FunFam" id="1.10.287.810:FF:000004">
    <property type="entry name" value="Mitochondrial import inner membrane translocase subunit Tim9"/>
    <property type="match status" value="1"/>
</dbReference>
<dbReference type="Gene3D" id="1.10.287.810">
    <property type="entry name" value="Mitochondrial import inner membrane translocase subunit tim13 like domains"/>
    <property type="match status" value="1"/>
</dbReference>
<dbReference type="InterPro" id="IPR050673">
    <property type="entry name" value="Mito_inner_translocase_sub"/>
</dbReference>
<dbReference type="InterPro" id="IPR004217">
    <property type="entry name" value="Tim10-like"/>
</dbReference>
<dbReference type="InterPro" id="IPR035427">
    <property type="entry name" value="Tim10-like_dom_sf"/>
</dbReference>
<dbReference type="PANTHER" id="PTHR13172">
    <property type="entry name" value="MITOCHONDRIAL IMPORT INNER MEMBRANE TRANSLOCASE SUBUNIT TIM9B"/>
    <property type="match status" value="1"/>
</dbReference>
<dbReference type="Pfam" id="PF02953">
    <property type="entry name" value="zf-Tim10_DDP"/>
    <property type="match status" value="1"/>
</dbReference>
<dbReference type="SUPFAM" id="SSF144122">
    <property type="entry name" value="Tim10-like"/>
    <property type="match status" value="1"/>
</dbReference>
<comment type="function">
    <text evidence="1">Mitochondrial intermembrane chaperone that participates in the import and insertion of multi-pass transmembrane proteins into the mitochondrial inner membrane. May also be required for the transfer of beta-barrel precursors from the TOM complex to the sorting and assembly machinery (SAM complex) of the outer membrane. Acts as a chaperone-like protein that protects the hydrophobic precursors from aggregation and guide them through the mitochondrial intermembrane space (By similarity).</text>
</comment>
<comment type="subunit">
    <text evidence="1">Heterohexamer; composed of 3 copies of TIMM9 and 3 copies of TIMM10/TIM10A, named soluble 70 kDa complex. The complex forms a 6-bladed alpha-propeller structure and associates with the TIMM22 component of the TIM22 complex. Interacts with multi-pass transmembrane proteins in transit. Also forms a complex composed of TIMM9, TIMM10/TIM10A and FXC1/TIM10B (By similarity).</text>
</comment>
<comment type="subcellular location">
    <subcellularLocation>
        <location evidence="1">Mitochondrion inner membrane</location>
        <topology evidence="1">Peripheral membrane protein</topology>
        <orientation evidence="1">Intermembrane side</orientation>
    </subcellularLocation>
</comment>
<comment type="domain">
    <text evidence="1">The twin CX3C motif contains 4 conserved Cys residues that form 2 disulfide bonds in the mitochondrial intermembrane space. However, during the transit of TIMM9 from cytoplasm into mitochondrion, the Cys residues probably coordinate zinc, thereby preventing folding and allowing its transfer across mitochondrial outer membrane (By similarity).</text>
</comment>
<comment type="similarity">
    <text evidence="3">Belongs to the small Tim family.</text>
</comment>
<protein>
    <recommendedName>
        <fullName>Mitochondrial import inner membrane translocase subunit Tim9</fullName>
    </recommendedName>
</protein>
<sequence>MAAQIPESDQIKQFKEFLGTYNKLTETCFLDCVKDFTTREVKPEEVTCSEHCLQKYLKMTQRISVRFQEYHIQQNEALAAKAGLLGQPR</sequence>
<feature type="initiator methionine" description="Removed" evidence="2">
    <location>
        <position position="1"/>
    </location>
</feature>
<feature type="chain" id="PRO_0000193596" description="Mitochondrial import inner membrane translocase subunit Tim9">
    <location>
        <begin position="2"/>
        <end position="89"/>
    </location>
</feature>
<feature type="short sequence motif" description="Twin CX3C motif">
    <location>
        <begin position="28"/>
        <end position="52"/>
    </location>
</feature>
<feature type="modified residue" description="N-acetylalanine" evidence="2">
    <location>
        <position position="2"/>
    </location>
</feature>
<feature type="disulfide bond" evidence="1">
    <location>
        <begin position="28"/>
        <end position="52"/>
    </location>
</feature>
<feature type="disulfide bond" evidence="1">
    <location>
        <begin position="32"/>
        <end position="48"/>
    </location>
</feature>